<name>WTF19_SCHPO</name>
<sequence>MKNKYYPLRSSMDELSAKNDNEIDLEKGPLPEYNSEDGSTLPPYSENINLKDPKQMGANNPNLFNTDESTTPPDYGEDSLSITHRENHSSGTADNSSTSPLKKAFLSFISIFVLNVPAVCYLTYKDALFKDYGKDEWVYFAVWCASCLMIFISLWYFYETWIKAVKVTVIFLAQCIKVTVVFLAQCVKVTSISLAKCVKLTAVFLAQCVKVTAVFLAQCVKVISIGLFNIRREMMIIIWLLWLIICCILFGCVKSGDLNLNKALIYSTCTISAVLLLIVSSVCIPFWTFERTLAKLAKVFLLQSGIVLVLNGTMFLRGKHFEWTGCEIEASVLFIMGNVLFLCEMECPGALIRTRNSIRNGIAFILEGAGRAIRGANDNNDIPLGEMEVESEV</sequence>
<protein>
    <recommendedName>
        <fullName evidence="7">Meiotic driver wtf19</fullName>
    </recommendedName>
</protein>
<comment type="function">
    <text evidence="6">Promotes unequal transmission of alleles from the parental zygote to progeny spores by acting as poison/antidote system where the poison and antidote proteins are produced from the same locus; the poison component is trans-acting and targets all spores within an ascus whereas the antidote component is spore-specific, leading to poisoning of all progeny that do not inherit the allele.</text>
</comment>
<comment type="function">
    <molecule>Isoform 1</molecule>
    <text evidence="1">Localizes isoform 2 to the vacuole thereby facilitating its degradation.</text>
</comment>
<comment type="function">
    <molecule>Isoform 2</molecule>
    <text evidence="1">Forms toxic aggregates that disrupt spore maturation.</text>
</comment>
<comment type="subunit">
    <text evidence="1 3">Homomer (By similarity). Forms protein aggregates (By similarity). The two isoforms can interact with each other and with themselves (By similarity). High sequence similarity is required for their interaction (By similarity).</text>
</comment>
<comment type="subcellular location">
    <molecule>Isoform 1</molecule>
    <subcellularLocation>
        <location evidence="1 4">Spore membrane</location>
        <topology evidence="4">Multi-pass membrane protein</topology>
    </subcellularLocation>
    <subcellularLocation>
        <location evidence="1 4">Vacuole membrane</location>
        <topology evidence="4">Multi-pass membrane protein</topology>
    </subcellularLocation>
    <text evidence="1">Contained within spores expressing the isoform and localizes isoform 2 to the vacuole.</text>
</comment>
<comment type="subcellular location">
    <molecule>Isoform 2</molecule>
    <subcellularLocation>
        <location evidence="1">Ascus epiplasm</location>
    </subcellularLocation>
    <subcellularLocation>
        <location evidence="1">Cytoplasm</location>
    </subcellularLocation>
    <subcellularLocation>
        <location evidence="1 4">Spore membrane</location>
        <topology evidence="4">Multi-pass membrane protein</topology>
    </subcellularLocation>
    <subcellularLocation>
        <location evidence="1 4">Vacuole membrane</location>
        <topology evidence="4">Multi-pass membrane protein</topology>
    </subcellularLocation>
    <subcellularLocation>
        <location evidence="1 4">Endoplasmic reticulum membrane</location>
        <topology evidence="4">Multi-pass membrane protein</topology>
    </subcellularLocation>
    <text evidence="1">Localizes in trans to all spores within an ascus. Localization to the spore vacuole is dependent on isoform 1.</text>
</comment>
<comment type="alternative products">
    <event type="alternative initiation"/>
    <isoform>
        <id>O74486-1</id>
        <name>1</name>
        <name evidence="8">Antidote</name>
        <name evidence="8">Suppressor</name>
        <sequence type="displayed"/>
    </isoform>
    <isoform>
        <id>O74486-2</id>
        <name>2</name>
        <name evidence="8">Poison</name>
        <sequence type="described" ref="VSP_060944"/>
    </isoform>
</comment>
<comment type="similarity">
    <text evidence="8">Belongs to the WTF family.</text>
</comment>
<comment type="sequence caution" evidence="8">
    <conflict type="frameshift">
        <sequence resource="EMBL-CDS" id="BAA13893"/>
    </conflict>
</comment>
<evidence type="ECO:0000250" key="1">
    <source>
        <dbReference type="UniProtKB" id="A0A218N034"/>
    </source>
</evidence>
<evidence type="ECO:0000250" key="2">
    <source>
        <dbReference type="UniProtKB" id="A0A218N035"/>
    </source>
</evidence>
<evidence type="ECO:0000250" key="3">
    <source>
        <dbReference type="UniProtKB" id="O74420"/>
    </source>
</evidence>
<evidence type="ECO:0000255" key="4"/>
<evidence type="ECO:0000256" key="5">
    <source>
        <dbReference type="SAM" id="MobiDB-lite"/>
    </source>
</evidence>
<evidence type="ECO:0000269" key="6">
    <source>
    </source>
</evidence>
<evidence type="ECO:0000303" key="7">
    <source>
    </source>
</evidence>
<evidence type="ECO:0000305" key="8"/>
<evidence type="ECO:0000312" key="9">
    <source>
        <dbReference type="PomBase" id="SPCC1906.03"/>
    </source>
</evidence>
<keyword id="KW-0024">Alternative initiation</keyword>
<keyword id="KW-0963">Cytoplasm</keyword>
<keyword id="KW-0256">Endoplasmic reticulum</keyword>
<keyword id="KW-0472">Membrane</keyword>
<keyword id="KW-1185">Reference proteome</keyword>
<keyword id="KW-0800">Toxin</keyword>
<keyword id="KW-0812">Transmembrane</keyword>
<keyword id="KW-1133">Transmembrane helix</keyword>
<keyword id="KW-0926">Vacuole</keyword>
<organism>
    <name type="scientific">Schizosaccharomyces pombe (strain 972 / ATCC 24843)</name>
    <name type="common">Fission yeast</name>
    <dbReference type="NCBI Taxonomy" id="284812"/>
    <lineage>
        <taxon>Eukaryota</taxon>
        <taxon>Fungi</taxon>
        <taxon>Dikarya</taxon>
        <taxon>Ascomycota</taxon>
        <taxon>Taphrinomycotina</taxon>
        <taxon>Schizosaccharomycetes</taxon>
        <taxon>Schizosaccharomycetales</taxon>
        <taxon>Schizosaccharomycetaceae</taxon>
        <taxon>Schizosaccharomyces</taxon>
    </lineage>
</organism>
<proteinExistence type="evidence at transcript level"/>
<dbReference type="EMBL" id="CU329672">
    <property type="protein sequence ID" value="CAA20772.1"/>
    <property type="molecule type" value="Genomic_DNA"/>
</dbReference>
<dbReference type="EMBL" id="D89232">
    <property type="protein sequence ID" value="BAA13893.1"/>
    <property type="status" value="ALT_FRAME"/>
    <property type="molecule type" value="mRNA"/>
</dbReference>
<dbReference type="PIR" id="T41211">
    <property type="entry name" value="T41211"/>
</dbReference>
<dbReference type="PIR" id="T43136">
    <property type="entry name" value="T43136"/>
</dbReference>
<dbReference type="RefSeq" id="NP_588407.1">
    <property type="nucleotide sequence ID" value="NM_001023398.2"/>
</dbReference>
<dbReference type="BioGRID" id="275827">
    <property type="interactions" value="2"/>
</dbReference>
<dbReference type="STRING" id="284812.O74486"/>
<dbReference type="iPTMnet" id="O74486"/>
<dbReference type="PaxDb" id="4896-SPCC1906.03.1"/>
<dbReference type="EnsemblFungi" id="SPCC1906.03.1">
    <molecule id="O74486-1"/>
    <property type="protein sequence ID" value="SPCC1906.03.1:pep"/>
    <property type="gene ID" value="SPCC1906.03"/>
</dbReference>
<dbReference type="GeneID" id="2539257"/>
<dbReference type="KEGG" id="spo:2539257"/>
<dbReference type="PomBase" id="SPCC1906.03">
    <property type="gene designation" value="wtf19"/>
</dbReference>
<dbReference type="VEuPathDB" id="FungiDB:SPCC1906.03"/>
<dbReference type="HOGENOM" id="CLU_763247_0_0_1"/>
<dbReference type="InParanoid" id="O74486"/>
<dbReference type="PhylomeDB" id="O74486"/>
<dbReference type="PRO" id="PR:O74486"/>
<dbReference type="Proteomes" id="UP000002485">
    <property type="component" value="Chromosome III"/>
</dbReference>
<dbReference type="GO" id="GO:0072324">
    <property type="term" value="C:ascus epiplasm"/>
    <property type="evidence" value="ECO:0007669"/>
    <property type="project" value="UniProtKB-SubCell"/>
</dbReference>
<dbReference type="GO" id="GO:0005737">
    <property type="term" value="C:cytoplasm"/>
    <property type="evidence" value="ECO:0007005"/>
    <property type="project" value="PomBase"/>
</dbReference>
<dbReference type="GO" id="GO:0005789">
    <property type="term" value="C:endoplasmic reticulum membrane"/>
    <property type="evidence" value="ECO:0007669"/>
    <property type="project" value="UniProtKB-SubCell"/>
</dbReference>
<dbReference type="GO" id="GO:0005794">
    <property type="term" value="C:Golgi apparatus"/>
    <property type="evidence" value="ECO:0007005"/>
    <property type="project" value="PomBase"/>
</dbReference>
<dbReference type="GO" id="GO:0005774">
    <property type="term" value="C:vacuolar membrane"/>
    <property type="evidence" value="ECO:0007669"/>
    <property type="project" value="UniProtKB-SubCell"/>
</dbReference>
<dbReference type="GO" id="GO:0110134">
    <property type="term" value="P:meiotic drive"/>
    <property type="evidence" value="ECO:0000314"/>
    <property type="project" value="UniProtKB"/>
</dbReference>
<dbReference type="InterPro" id="IPR004982">
    <property type="entry name" value="WTF"/>
</dbReference>
<dbReference type="Pfam" id="PF03303">
    <property type="entry name" value="WTF"/>
    <property type="match status" value="2"/>
</dbReference>
<reference key="1">
    <citation type="journal article" date="2002" name="Nature">
        <title>The genome sequence of Schizosaccharomyces pombe.</title>
        <authorList>
            <person name="Wood V."/>
            <person name="Gwilliam R."/>
            <person name="Rajandream M.A."/>
            <person name="Lyne M.H."/>
            <person name="Lyne R."/>
            <person name="Stewart A."/>
            <person name="Sgouros J.G."/>
            <person name="Peat N."/>
            <person name="Hayles J."/>
            <person name="Baker S.G."/>
            <person name="Basham D."/>
            <person name="Bowman S."/>
            <person name="Brooks K."/>
            <person name="Brown D."/>
            <person name="Brown S."/>
            <person name="Chillingworth T."/>
            <person name="Churcher C.M."/>
            <person name="Collins M."/>
            <person name="Connor R."/>
            <person name="Cronin A."/>
            <person name="Davis P."/>
            <person name="Feltwell T."/>
            <person name="Fraser A."/>
            <person name="Gentles S."/>
            <person name="Goble A."/>
            <person name="Hamlin N."/>
            <person name="Harris D.E."/>
            <person name="Hidalgo J."/>
            <person name="Hodgson G."/>
            <person name="Holroyd S."/>
            <person name="Hornsby T."/>
            <person name="Howarth S."/>
            <person name="Huckle E.J."/>
            <person name="Hunt S."/>
            <person name="Jagels K."/>
            <person name="James K.D."/>
            <person name="Jones L."/>
            <person name="Jones M."/>
            <person name="Leather S."/>
            <person name="McDonald S."/>
            <person name="McLean J."/>
            <person name="Mooney P."/>
            <person name="Moule S."/>
            <person name="Mungall K.L."/>
            <person name="Murphy L.D."/>
            <person name="Niblett D."/>
            <person name="Odell C."/>
            <person name="Oliver K."/>
            <person name="O'Neil S."/>
            <person name="Pearson D."/>
            <person name="Quail M.A."/>
            <person name="Rabbinowitsch E."/>
            <person name="Rutherford K.M."/>
            <person name="Rutter S."/>
            <person name="Saunders D."/>
            <person name="Seeger K."/>
            <person name="Sharp S."/>
            <person name="Skelton J."/>
            <person name="Simmonds M.N."/>
            <person name="Squares R."/>
            <person name="Squares S."/>
            <person name="Stevens K."/>
            <person name="Taylor K."/>
            <person name="Taylor R.G."/>
            <person name="Tivey A."/>
            <person name="Walsh S.V."/>
            <person name="Warren T."/>
            <person name="Whitehead S."/>
            <person name="Woodward J.R."/>
            <person name="Volckaert G."/>
            <person name="Aert R."/>
            <person name="Robben J."/>
            <person name="Grymonprez B."/>
            <person name="Weltjens I."/>
            <person name="Vanstreels E."/>
            <person name="Rieger M."/>
            <person name="Schaefer M."/>
            <person name="Mueller-Auer S."/>
            <person name="Gabel C."/>
            <person name="Fuchs M."/>
            <person name="Duesterhoeft A."/>
            <person name="Fritzc C."/>
            <person name="Holzer E."/>
            <person name="Moestl D."/>
            <person name="Hilbert H."/>
            <person name="Borzym K."/>
            <person name="Langer I."/>
            <person name="Beck A."/>
            <person name="Lehrach H."/>
            <person name="Reinhardt R."/>
            <person name="Pohl T.M."/>
            <person name="Eger P."/>
            <person name="Zimmermann W."/>
            <person name="Wedler H."/>
            <person name="Wambutt R."/>
            <person name="Purnelle B."/>
            <person name="Goffeau A."/>
            <person name="Cadieu E."/>
            <person name="Dreano S."/>
            <person name="Gloux S."/>
            <person name="Lelaure V."/>
            <person name="Mottier S."/>
            <person name="Galibert F."/>
            <person name="Aves S.J."/>
            <person name="Xiang Z."/>
            <person name="Hunt C."/>
            <person name="Moore K."/>
            <person name="Hurst S.M."/>
            <person name="Lucas M."/>
            <person name="Rochet M."/>
            <person name="Gaillardin C."/>
            <person name="Tallada V.A."/>
            <person name="Garzon A."/>
            <person name="Thode G."/>
            <person name="Daga R.R."/>
            <person name="Cruzado L."/>
            <person name="Jimenez J."/>
            <person name="Sanchez M."/>
            <person name="del Rey F."/>
            <person name="Benito J."/>
            <person name="Dominguez A."/>
            <person name="Revuelta J.L."/>
            <person name="Moreno S."/>
            <person name="Armstrong J."/>
            <person name="Forsburg S.L."/>
            <person name="Cerutti L."/>
            <person name="Lowe T."/>
            <person name="McCombie W.R."/>
            <person name="Paulsen I."/>
            <person name="Potashkin J."/>
            <person name="Shpakovski G.V."/>
            <person name="Ussery D."/>
            <person name="Barrell B.G."/>
            <person name="Nurse P."/>
        </authorList>
    </citation>
    <scope>NUCLEOTIDE SEQUENCE [LARGE SCALE GENOMIC DNA]</scope>
    <source>
        <strain>972 / ATCC 24843</strain>
    </source>
</reference>
<reference key="2">
    <citation type="journal article" date="1997" name="DNA Res.">
        <title>Identification of open reading frames in Schizosaccharomyces pombe cDNAs.</title>
        <authorList>
            <person name="Yoshioka S."/>
            <person name="Kato K."/>
            <person name="Nakai K."/>
            <person name="Okayama H."/>
            <person name="Nojima H."/>
        </authorList>
    </citation>
    <scope>NUCLEOTIDE SEQUENCE [LARGE SCALE MRNA] OF 105-393</scope>
    <source>
        <strain>PR745</strain>
    </source>
</reference>
<reference key="3">
    <citation type="journal article" date="2019" name="Mol. Biol. Evol.">
        <title>Killer meiotic drive and dynamic evolution of the wtf gene family.</title>
        <authorList>
            <person name="Eickbush M.T."/>
            <person name="Young J.M."/>
            <person name="Zanders S.E."/>
        </authorList>
    </citation>
    <scope>ALTERNATIVE INITIATION (ISOFORMS 1 AND 2)</scope>
</reference>
<reference key="4">
    <citation type="journal article" date="2020" name="PLoS Genet.">
        <title>Dramatically diverse Schizosaccharomyces pombe wtf meiotic drivers all display high gamete-killing efficiency.</title>
        <authorList>
            <person name="Bravo Nunez M.A."/>
            <person name="Sabbarini I.M."/>
            <person name="Eickbush M.T."/>
            <person name="Liang Y."/>
            <person name="Lange J.J."/>
            <person name="Kent A.M."/>
            <person name="Zanders S.E."/>
        </authorList>
    </citation>
    <scope>FUNCTION</scope>
</reference>
<gene>
    <name evidence="9" type="primary">wtf19</name>
    <name evidence="9" type="ORF">SPCC1906.03</name>
</gene>
<accession>O74486</accession>
<accession>P78881</accession>
<feature type="chain" id="PRO_0000193231" description="Meiotic driver wtf19">
    <location>
        <begin position="1"/>
        <end position="393"/>
    </location>
</feature>
<feature type="transmembrane region" description="Helical" evidence="4">
    <location>
        <begin position="104"/>
        <end position="124"/>
    </location>
</feature>
<feature type="transmembrane region" description="Helical" evidence="4">
    <location>
        <begin position="137"/>
        <end position="157"/>
    </location>
</feature>
<feature type="transmembrane region" description="Helical" evidence="4">
    <location>
        <begin position="167"/>
        <end position="187"/>
    </location>
</feature>
<feature type="transmembrane region" description="Helical" evidence="4">
    <location>
        <begin position="208"/>
        <end position="228"/>
    </location>
</feature>
<feature type="transmembrane region" description="Helical" evidence="4">
    <location>
        <begin position="233"/>
        <end position="253"/>
    </location>
</feature>
<feature type="transmembrane region" description="Helical" evidence="4">
    <location>
        <begin position="269"/>
        <end position="289"/>
    </location>
</feature>
<feature type="transmembrane region" description="Helical" evidence="4">
    <location>
        <begin position="296"/>
        <end position="316"/>
    </location>
</feature>
<feature type="transmembrane region" description="Helical" evidence="4">
    <location>
        <begin position="332"/>
        <end position="352"/>
    </location>
</feature>
<feature type="region of interest" description="Disordered" evidence="5">
    <location>
        <begin position="1"/>
        <end position="98"/>
    </location>
</feature>
<feature type="compositionally biased region" description="Basic and acidic residues" evidence="5">
    <location>
        <begin position="11"/>
        <end position="29"/>
    </location>
</feature>
<feature type="compositionally biased region" description="Polar residues" evidence="5">
    <location>
        <begin position="57"/>
        <end position="72"/>
    </location>
</feature>
<feature type="compositionally biased region" description="Polar residues" evidence="5">
    <location>
        <begin position="89"/>
        <end position="98"/>
    </location>
</feature>
<feature type="splice variant" id="VSP_060944" description="In isoform 2." evidence="2">
    <location>
        <begin position="1"/>
        <end position="55"/>
    </location>
</feature>
<feature type="sequence conflict" description="In Ref. 2; BAA13893." evidence="8" ref="2">
    <original>L</original>
    <variation>S</variation>
    <location>
        <position position="183"/>
    </location>
</feature>
<feature type="sequence conflict" description="In Ref. 2; BAA13893." evidence="8" ref="2">
    <original>L</original>
    <variation>F</variation>
    <location>
        <position position="243"/>
    </location>
</feature>